<protein>
    <recommendedName>
        <fullName>WD repeat-containing protein jip5</fullName>
    </recommendedName>
</protein>
<feature type="chain" id="PRO_0000333551" description="WD repeat-containing protein jip5">
    <location>
        <begin position="1"/>
        <end position="430"/>
    </location>
</feature>
<feature type="repeat" description="WD 1">
    <location>
        <begin position="9"/>
        <end position="48"/>
    </location>
</feature>
<feature type="repeat" description="WD 2">
    <location>
        <begin position="72"/>
        <end position="111"/>
    </location>
</feature>
<feature type="repeat" description="WD 3">
    <location>
        <begin position="117"/>
        <end position="158"/>
    </location>
</feature>
<feature type="repeat" description="WD 4">
    <location>
        <begin position="215"/>
        <end position="262"/>
    </location>
</feature>
<feature type="repeat" description="WD 5">
    <location>
        <begin position="272"/>
        <end position="318"/>
    </location>
</feature>
<feature type="repeat" description="WD 6">
    <location>
        <begin position="323"/>
        <end position="360"/>
    </location>
</feature>
<feature type="region of interest" description="Disordered" evidence="2">
    <location>
        <begin position="356"/>
        <end position="430"/>
    </location>
</feature>
<feature type="compositionally biased region" description="Acidic residues" evidence="2">
    <location>
        <begin position="356"/>
        <end position="374"/>
    </location>
</feature>
<feature type="compositionally biased region" description="Basic and acidic residues" evidence="2">
    <location>
        <begin position="382"/>
        <end position="397"/>
    </location>
</feature>
<feature type="compositionally biased region" description="Basic residues" evidence="2">
    <location>
        <begin position="405"/>
        <end position="416"/>
    </location>
</feature>
<organism>
    <name type="scientific">Botryotinia fuckeliana (strain B05.10)</name>
    <name type="common">Noble rot fungus</name>
    <name type="synonym">Botrytis cinerea</name>
    <dbReference type="NCBI Taxonomy" id="332648"/>
    <lineage>
        <taxon>Eukaryota</taxon>
        <taxon>Fungi</taxon>
        <taxon>Dikarya</taxon>
        <taxon>Ascomycota</taxon>
        <taxon>Pezizomycotina</taxon>
        <taxon>Leotiomycetes</taxon>
        <taxon>Helotiales</taxon>
        <taxon>Sclerotiniaceae</taxon>
        <taxon>Botrytis</taxon>
    </lineage>
</organism>
<accession>A6RWR8</accession>
<accession>A0A384J7K7</accession>
<keyword id="KW-0539">Nucleus</keyword>
<keyword id="KW-1185">Reference proteome</keyword>
<keyword id="KW-0677">Repeat</keyword>
<keyword id="KW-0853">WD repeat</keyword>
<evidence type="ECO:0000250" key="1"/>
<evidence type="ECO:0000256" key="2">
    <source>
        <dbReference type="SAM" id="MobiDB-lite"/>
    </source>
</evidence>
<evidence type="ECO:0000305" key="3"/>
<name>JIP5_BOTFB</name>
<gene>
    <name type="primary">jip5</name>
    <name type="ORF">BC1G_05183</name>
    <name type="ORF">BCIN_01g10950</name>
</gene>
<comment type="subcellular location">
    <subcellularLocation>
        <location evidence="1">Nucleus</location>
        <location evidence="1">Nucleolus</location>
    </subcellularLocation>
</comment>
<comment type="similarity">
    <text evidence="3">Belongs to the WD repeat WDR55 family.</text>
</comment>
<sequence length="430" mass="46178">MFENLCTLPLSSELFTQALHPTEPILSVGLSSGHVQCFRLPAAEAAAEDEDGDTSVVSTGTSTIDTEWRTRRHKGSCRTLGYNHDGEVLYSAGTDSLLKAAASSTGQVTSKILIPNTNTDKLDPPTLLHALSPQTLLLTTDSCALHLYDLRDNSSFKSGKPAQTHYPHDDYISSLSPLPPTEMSTSGFSKQWITTGGTTLAVTDLRRGVLVKSEDQEEELLSSVFVGGLPARGKYGREKVCVGNGNGVITLWEKGVWDDQSERIIVDGGGKAGGESLDAMIAMPEELEGGYGGKCVVVGCGDGSVRIVRVGGTKGVVEDMKHDDIEAVVAVGFDVEGRLISGGGDTVKVWQEKVEEEEEEEEEEEQEDIEDNDDVMGGGGKHALERDSDDSDARADSSDEEDGGRKKRKKKKKGKKNQVGNGILKFKGME</sequence>
<dbReference type="EMBL" id="CP009805">
    <property type="protein sequence ID" value="ATZ46513.1"/>
    <property type="molecule type" value="Genomic_DNA"/>
</dbReference>
<dbReference type="RefSeq" id="XP_001556414.1">
    <property type="nucleotide sequence ID" value="XM_001556364.1"/>
</dbReference>
<dbReference type="SMR" id="A6RWR8"/>
<dbReference type="EnsemblFungi" id="Bcin01g10950.1">
    <property type="protein sequence ID" value="Bcin01p10950.1"/>
    <property type="gene ID" value="Bcin01g10950"/>
</dbReference>
<dbReference type="GeneID" id="5437001"/>
<dbReference type="KEGG" id="bfu:BCIN_01g10950"/>
<dbReference type="VEuPathDB" id="FungiDB:Bcin01g10950"/>
<dbReference type="OrthoDB" id="2288928at2759"/>
<dbReference type="Proteomes" id="UP000001798">
    <property type="component" value="Chromosome bcin01"/>
</dbReference>
<dbReference type="GO" id="GO:0005730">
    <property type="term" value="C:nucleolus"/>
    <property type="evidence" value="ECO:0007669"/>
    <property type="project" value="UniProtKB-SubCell"/>
</dbReference>
<dbReference type="Gene3D" id="2.130.10.10">
    <property type="entry name" value="YVTN repeat-like/Quinoprotein amine dehydrogenase"/>
    <property type="match status" value="1"/>
</dbReference>
<dbReference type="InterPro" id="IPR015943">
    <property type="entry name" value="WD40/YVTN_repeat-like_dom_sf"/>
</dbReference>
<dbReference type="InterPro" id="IPR036322">
    <property type="entry name" value="WD40_repeat_dom_sf"/>
</dbReference>
<dbReference type="InterPro" id="IPR050505">
    <property type="entry name" value="WDR55_POC1"/>
</dbReference>
<dbReference type="PANTHER" id="PTHR44019">
    <property type="entry name" value="WD REPEAT-CONTAINING PROTEIN 55"/>
    <property type="match status" value="1"/>
</dbReference>
<dbReference type="PANTHER" id="PTHR44019:SF20">
    <property type="entry name" value="WD REPEAT-CONTAINING PROTEIN 55"/>
    <property type="match status" value="1"/>
</dbReference>
<dbReference type="SUPFAM" id="SSF50978">
    <property type="entry name" value="WD40 repeat-like"/>
    <property type="match status" value="1"/>
</dbReference>
<proteinExistence type="inferred from homology"/>
<reference key="1">
    <citation type="journal article" date="2011" name="PLoS Genet.">
        <title>Genomic analysis of the necrotrophic fungal pathogens Sclerotinia sclerotiorum and Botrytis cinerea.</title>
        <authorList>
            <person name="Amselem J."/>
            <person name="Cuomo C.A."/>
            <person name="van Kan J.A.L."/>
            <person name="Viaud M."/>
            <person name="Benito E.P."/>
            <person name="Couloux A."/>
            <person name="Coutinho P.M."/>
            <person name="de Vries R.P."/>
            <person name="Dyer P.S."/>
            <person name="Fillinger S."/>
            <person name="Fournier E."/>
            <person name="Gout L."/>
            <person name="Hahn M."/>
            <person name="Kohn L."/>
            <person name="Lapalu N."/>
            <person name="Plummer K.M."/>
            <person name="Pradier J.-M."/>
            <person name="Quevillon E."/>
            <person name="Sharon A."/>
            <person name="Simon A."/>
            <person name="ten Have A."/>
            <person name="Tudzynski B."/>
            <person name="Tudzynski P."/>
            <person name="Wincker P."/>
            <person name="Andrew M."/>
            <person name="Anthouard V."/>
            <person name="Beever R.E."/>
            <person name="Beffa R."/>
            <person name="Benoit I."/>
            <person name="Bouzid O."/>
            <person name="Brault B."/>
            <person name="Chen Z."/>
            <person name="Choquer M."/>
            <person name="Collemare J."/>
            <person name="Cotton P."/>
            <person name="Danchin E.G."/>
            <person name="Da Silva C."/>
            <person name="Gautier A."/>
            <person name="Giraud C."/>
            <person name="Giraud T."/>
            <person name="Gonzalez C."/>
            <person name="Grossetete S."/>
            <person name="Gueldener U."/>
            <person name="Henrissat B."/>
            <person name="Howlett B.J."/>
            <person name="Kodira C."/>
            <person name="Kretschmer M."/>
            <person name="Lappartient A."/>
            <person name="Leroch M."/>
            <person name="Levis C."/>
            <person name="Mauceli E."/>
            <person name="Neuveglise C."/>
            <person name="Oeser B."/>
            <person name="Pearson M."/>
            <person name="Poulain J."/>
            <person name="Poussereau N."/>
            <person name="Quesneville H."/>
            <person name="Rascle C."/>
            <person name="Schumacher J."/>
            <person name="Segurens B."/>
            <person name="Sexton A."/>
            <person name="Silva E."/>
            <person name="Sirven C."/>
            <person name="Soanes D.M."/>
            <person name="Talbot N.J."/>
            <person name="Templeton M."/>
            <person name="Yandava C."/>
            <person name="Yarden O."/>
            <person name="Zeng Q."/>
            <person name="Rollins J.A."/>
            <person name="Lebrun M.-H."/>
            <person name="Dickman M."/>
        </authorList>
    </citation>
    <scope>NUCLEOTIDE SEQUENCE [LARGE SCALE GENOMIC DNA]</scope>
    <source>
        <strain>B05.10</strain>
    </source>
</reference>
<reference key="2">
    <citation type="journal article" date="2012" name="Eukaryot. Cell">
        <title>Genome update of Botrytis cinerea strains B05.10 and T4.</title>
        <authorList>
            <person name="Staats M."/>
            <person name="van Kan J.A.L."/>
        </authorList>
    </citation>
    <scope>NUCLEOTIDE SEQUENCE [LARGE SCALE GENOMIC DNA]</scope>
    <scope>GENOME REANNOTATION</scope>
    <source>
        <strain>B05.10</strain>
    </source>
</reference>
<reference key="3">
    <citation type="journal article" date="2017" name="Mol. Plant Pathol.">
        <title>A gapless genome sequence of the fungus Botrytis cinerea.</title>
        <authorList>
            <person name="van Kan J.A.L."/>
            <person name="Stassen J.H.M."/>
            <person name="Mosbach A."/>
            <person name="van der Lee T.A.J."/>
            <person name="Faino L."/>
            <person name="Farmer A.D."/>
            <person name="Papasotiriou D.G."/>
            <person name="Zhou S."/>
            <person name="Seidl M.F."/>
            <person name="Cottam E."/>
            <person name="Edel D."/>
            <person name="Hahn M."/>
            <person name="Schwartz D.C."/>
            <person name="Dietrich R.A."/>
            <person name="Widdison S."/>
            <person name="Scalliet G."/>
        </authorList>
    </citation>
    <scope>NUCLEOTIDE SEQUENCE [LARGE SCALE GENOMIC DNA]</scope>
    <scope>GENOME REANNOTATION</scope>
    <source>
        <strain>B05.10</strain>
    </source>
</reference>